<protein>
    <recommendedName>
        <fullName evidence="1">Small ribosomal subunit protein uS19</fullName>
    </recommendedName>
    <alternativeName>
        <fullName evidence="2">30S ribosomal protein S19</fullName>
    </alternativeName>
</protein>
<reference key="1">
    <citation type="journal article" date="2008" name="Proc. Natl. Acad. Sci. U.S.A.">
        <title>The genome sequence of Bifidobacterium longum subsp. infantis reveals adaptations for milk utilization within the infant microbiome.</title>
        <authorList>
            <person name="Sela D.A."/>
            <person name="Chapman J."/>
            <person name="Adeuya A."/>
            <person name="Kim J.H."/>
            <person name="Chen F."/>
            <person name="Whitehead T.R."/>
            <person name="Lapidus A."/>
            <person name="Rokhsar D.S."/>
            <person name="Lebrilla C.B."/>
            <person name="German J.B."/>
            <person name="Price N.P."/>
            <person name="Richardson P.M."/>
            <person name="Mills D.A."/>
        </authorList>
    </citation>
    <scope>NUCLEOTIDE SEQUENCE [LARGE SCALE GENOMIC DNA]</scope>
    <source>
        <strain>ATCC 15697 / DSM 20088 / JCM 1222 / NCTC 11817 / S12</strain>
    </source>
</reference>
<reference key="2">
    <citation type="journal article" date="2011" name="Nature">
        <title>Bifidobacteria can protect from enteropathogenic infection through production of acetate.</title>
        <authorList>
            <person name="Fukuda S."/>
            <person name="Toh H."/>
            <person name="Hase K."/>
            <person name="Oshima K."/>
            <person name="Nakanishi Y."/>
            <person name="Yoshimura K."/>
            <person name="Tobe T."/>
            <person name="Clarke J.M."/>
            <person name="Topping D.L."/>
            <person name="Suzuki T."/>
            <person name="Taylor T.D."/>
            <person name="Itoh K."/>
            <person name="Kikuchi J."/>
            <person name="Morita H."/>
            <person name="Hattori M."/>
            <person name="Ohno H."/>
        </authorList>
    </citation>
    <scope>NUCLEOTIDE SEQUENCE [LARGE SCALE GENOMIC DNA]</scope>
    <source>
        <strain>ATCC 15697 / DSM 20088 / JCM 1222 / NCTC 11817 / S12</strain>
    </source>
</reference>
<sequence length="92" mass="10511">MTRSIKKGPFVDAHLQKKVDEQNEKGTKNVIKTWSRRSMITPDFIGHTFAVHDGRKHVPVFVTEAMVGHKLGEFAPTKTFKGHVKDDKKARR</sequence>
<accession>B7GND6</accession>
<accession>E8MN80</accession>
<name>RS19_BIFLS</name>
<comment type="function">
    <text evidence="1">Protein S19 forms a complex with S13 that binds strongly to the 16S ribosomal RNA.</text>
</comment>
<comment type="similarity">
    <text evidence="1">Belongs to the universal ribosomal protein uS19 family.</text>
</comment>
<gene>
    <name evidence="1" type="primary">rpsS</name>
    <name type="ordered locus">Blon_2233</name>
    <name type="ordered locus">BLIJ_2306</name>
</gene>
<dbReference type="EMBL" id="CP001095">
    <property type="protein sequence ID" value="ACJ53292.1"/>
    <property type="molecule type" value="Genomic_DNA"/>
</dbReference>
<dbReference type="EMBL" id="AP010889">
    <property type="protein sequence ID" value="BAJ69883.1"/>
    <property type="molecule type" value="Genomic_DNA"/>
</dbReference>
<dbReference type="RefSeq" id="WP_003814508.1">
    <property type="nucleotide sequence ID" value="NZ_JDTT01000039.1"/>
</dbReference>
<dbReference type="SMR" id="B7GND6"/>
<dbReference type="GeneID" id="93093117"/>
<dbReference type="KEGG" id="bln:Blon_2233"/>
<dbReference type="KEGG" id="blon:BLIJ_2306"/>
<dbReference type="PATRIC" id="fig|391904.8.peg.2308"/>
<dbReference type="HOGENOM" id="CLU_144911_0_1_11"/>
<dbReference type="Proteomes" id="UP000001360">
    <property type="component" value="Chromosome"/>
</dbReference>
<dbReference type="GO" id="GO:0005737">
    <property type="term" value="C:cytoplasm"/>
    <property type="evidence" value="ECO:0007669"/>
    <property type="project" value="UniProtKB-ARBA"/>
</dbReference>
<dbReference type="GO" id="GO:0015935">
    <property type="term" value="C:small ribosomal subunit"/>
    <property type="evidence" value="ECO:0007669"/>
    <property type="project" value="InterPro"/>
</dbReference>
<dbReference type="GO" id="GO:0019843">
    <property type="term" value="F:rRNA binding"/>
    <property type="evidence" value="ECO:0007669"/>
    <property type="project" value="UniProtKB-UniRule"/>
</dbReference>
<dbReference type="GO" id="GO:0003735">
    <property type="term" value="F:structural constituent of ribosome"/>
    <property type="evidence" value="ECO:0007669"/>
    <property type="project" value="InterPro"/>
</dbReference>
<dbReference type="GO" id="GO:0000028">
    <property type="term" value="P:ribosomal small subunit assembly"/>
    <property type="evidence" value="ECO:0007669"/>
    <property type="project" value="TreeGrafter"/>
</dbReference>
<dbReference type="GO" id="GO:0006412">
    <property type="term" value="P:translation"/>
    <property type="evidence" value="ECO:0007669"/>
    <property type="project" value="UniProtKB-UniRule"/>
</dbReference>
<dbReference type="FunFam" id="3.30.860.10:FF:000001">
    <property type="entry name" value="30S ribosomal protein S19"/>
    <property type="match status" value="1"/>
</dbReference>
<dbReference type="Gene3D" id="3.30.860.10">
    <property type="entry name" value="30s Ribosomal Protein S19, Chain A"/>
    <property type="match status" value="1"/>
</dbReference>
<dbReference type="HAMAP" id="MF_00531">
    <property type="entry name" value="Ribosomal_uS19"/>
    <property type="match status" value="1"/>
</dbReference>
<dbReference type="InterPro" id="IPR002222">
    <property type="entry name" value="Ribosomal_uS19"/>
</dbReference>
<dbReference type="InterPro" id="IPR005732">
    <property type="entry name" value="Ribosomal_uS19_bac-type"/>
</dbReference>
<dbReference type="InterPro" id="IPR020934">
    <property type="entry name" value="Ribosomal_uS19_CS"/>
</dbReference>
<dbReference type="InterPro" id="IPR023575">
    <property type="entry name" value="Ribosomal_uS19_SF"/>
</dbReference>
<dbReference type="NCBIfam" id="TIGR01050">
    <property type="entry name" value="rpsS_bact"/>
    <property type="match status" value="1"/>
</dbReference>
<dbReference type="PANTHER" id="PTHR11880">
    <property type="entry name" value="RIBOSOMAL PROTEIN S19P FAMILY MEMBER"/>
    <property type="match status" value="1"/>
</dbReference>
<dbReference type="PANTHER" id="PTHR11880:SF8">
    <property type="entry name" value="SMALL RIBOSOMAL SUBUNIT PROTEIN US19M"/>
    <property type="match status" value="1"/>
</dbReference>
<dbReference type="Pfam" id="PF00203">
    <property type="entry name" value="Ribosomal_S19"/>
    <property type="match status" value="1"/>
</dbReference>
<dbReference type="PIRSF" id="PIRSF002144">
    <property type="entry name" value="Ribosomal_S19"/>
    <property type="match status" value="1"/>
</dbReference>
<dbReference type="PRINTS" id="PR00975">
    <property type="entry name" value="RIBOSOMALS19"/>
</dbReference>
<dbReference type="SUPFAM" id="SSF54570">
    <property type="entry name" value="Ribosomal protein S19"/>
    <property type="match status" value="1"/>
</dbReference>
<dbReference type="PROSITE" id="PS00323">
    <property type="entry name" value="RIBOSOMAL_S19"/>
    <property type="match status" value="1"/>
</dbReference>
<evidence type="ECO:0000255" key="1">
    <source>
        <dbReference type="HAMAP-Rule" id="MF_00531"/>
    </source>
</evidence>
<evidence type="ECO:0000305" key="2"/>
<feature type="chain" id="PRO_1000146369" description="Small ribosomal subunit protein uS19">
    <location>
        <begin position="1"/>
        <end position="92"/>
    </location>
</feature>
<organism>
    <name type="scientific">Bifidobacterium longum subsp. infantis (strain ATCC 15697 / DSM 20088 / JCM 1222 / NCTC 11817 / S12)</name>
    <dbReference type="NCBI Taxonomy" id="391904"/>
    <lineage>
        <taxon>Bacteria</taxon>
        <taxon>Bacillati</taxon>
        <taxon>Actinomycetota</taxon>
        <taxon>Actinomycetes</taxon>
        <taxon>Bifidobacteriales</taxon>
        <taxon>Bifidobacteriaceae</taxon>
        <taxon>Bifidobacterium</taxon>
    </lineage>
</organism>
<keyword id="KW-0687">Ribonucleoprotein</keyword>
<keyword id="KW-0689">Ribosomal protein</keyword>
<keyword id="KW-0694">RNA-binding</keyword>
<keyword id="KW-0699">rRNA-binding</keyword>
<proteinExistence type="inferred from homology"/>